<sequence length="600" mass="65339">MCGIVGYIGQLDAKEILLKGLEKLEYRGYDSAGIAVANEQGIHVFKEKGRIADLREVVDANIEAKAGIGHTRWATHGEPSYLNAHPHQSALGRFTLVHNGVIENYVQLKQEYLQDVELKSDTDTEVVVQVIEQFVNGGLDTEEAFRKTLTLLKGSYAIALFDNENRETIFVAKNKSPLLVGLGDTFNVVASDAMAMLQVTNEYVELMDKEMVIVTDDQVVIKNLDGDVISRASYIAELDASDIEKGTYPHYMLKETDEQPVVMRKIIQTYQDENGKLSVPGDIAAAVAEADRIYIIGCGTSYHAGLVGKQYIEMWANVPVEVHVASEFSYNMPLLSKKPLFIFLSQSGETADSRAVLVQVKALGHKALTITNVPGSTLSREADYTLLLHAGPEIAVASTKAYTAQIAVLAVLASVAADKNGIDIGFDLVKELGIAANAMEALCDQKDEMEMIAREYLTVSRNAFFIGRGLDYFVCVEGALKLKEISYIQAEGFAGGELKHGTIALIEQGTPVFALATQEHVNLSIRGNVKEVAARGANTCIISLKGLDDADDRFVLPEVNPALAPLVSVVPLQLIAYYAALHRGCDVDKPRNLAKSVTVE</sequence>
<organism>
    <name type="scientific">Bacillus spizizenii (strain ATCC 23059 / NRRL B-14472 / W23)</name>
    <name type="common">Bacillus subtilis subsp. spizizenii</name>
    <dbReference type="NCBI Taxonomy" id="655816"/>
    <lineage>
        <taxon>Bacteria</taxon>
        <taxon>Bacillati</taxon>
        <taxon>Bacillota</taxon>
        <taxon>Bacilli</taxon>
        <taxon>Bacillales</taxon>
        <taxon>Bacillaceae</taxon>
        <taxon>Bacillus</taxon>
    </lineage>
</organism>
<feature type="initiator methionine" description="Removed" evidence="1">
    <location>
        <position position="1"/>
    </location>
</feature>
<feature type="chain" id="PRO_0000403658" description="Glutamine--fructose-6-phosphate aminotransferase [isomerizing]">
    <location>
        <begin position="2"/>
        <end position="600"/>
    </location>
</feature>
<feature type="domain" description="Glutamine amidotransferase type-2">
    <location>
        <begin position="2"/>
        <end position="217"/>
    </location>
</feature>
<feature type="domain" description="SIS 1">
    <location>
        <begin position="283"/>
        <end position="422"/>
    </location>
</feature>
<feature type="domain" description="SIS 2">
    <location>
        <begin position="452"/>
        <end position="590"/>
    </location>
</feature>
<feature type="active site" description="Nucleophile; for GATase activity" evidence="1">
    <location>
        <position position="2"/>
    </location>
</feature>
<feature type="active site" description="For Fru-6P isomerization activity" evidence="1">
    <location>
        <position position="595"/>
    </location>
</feature>
<comment type="function">
    <text evidence="1">Catalyzes the first step in hexosamine metabolism, converting fructose-6P into glucosamine-6P using glutamine as a nitrogen source.</text>
</comment>
<comment type="catalytic activity">
    <reaction>
        <text>D-fructose 6-phosphate + L-glutamine = D-glucosamine 6-phosphate + L-glutamate</text>
        <dbReference type="Rhea" id="RHEA:13237"/>
        <dbReference type="ChEBI" id="CHEBI:29985"/>
        <dbReference type="ChEBI" id="CHEBI:58359"/>
        <dbReference type="ChEBI" id="CHEBI:58725"/>
        <dbReference type="ChEBI" id="CHEBI:61527"/>
        <dbReference type="EC" id="2.6.1.16"/>
    </reaction>
</comment>
<comment type="subunit">
    <text evidence="1">Homodimer.</text>
</comment>
<comment type="subcellular location">
    <subcellularLocation>
        <location evidence="1">Cytoplasm</location>
    </subcellularLocation>
</comment>
<gene>
    <name type="primary">glmS</name>
    <name type="ordered locus">BSUW23_00920</name>
</gene>
<reference key="1">
    <citation type="journal article" date="2011" name="Microbiology">
        <title>The genome sequence of Bacillus subtilis subsp. spizizenii W23: insights into speciation within the B. subtilis complex and into the history of B. subtilis genetics.</title>
        <authorList>
            <person name="Zeigler D.R."/>
        </authorList>
    </citation>
    <scope>NUCLEOTIDE SEQUENCE [LARGE SCALE GENOMIC DNA]</scope>
    <source>
        <strain>ATCC 23059 / NRRL B-14472 / W23</strain>
    </source>
</reference>
<reference key="2">
    <citation type="journal article" date="1993" name="J. Bacteriol.">
        <title>Bacillus subtilis alkA gene encoding inducible 3-methyladenine DNA glycosylase is adjacent to the ada operon.</title>
        <authorList>
            <person name="Morohoshi F."/>
            <person name="Hayashi K."/>
            <person name="Munakata N."/>
        </authorList>
    </citation>
    <scope>NUCLEOTIDE SEQUENCE [GENOMIC DNA] OF 471-600</scope>
    <source>
        <strain>ATCC 23059 / NRRL B-14472 / W23</strain>
    </source>
</reference>
<name>GLMS_BACSH</name>
<keyword id="KW-0032">Aminotransferase</keyword>
<keyword id="KW-0963">Cytoplasm</keyword>
<keyword id="KW-0315">Glutamine amidotransferase</keyword>
<keyword id="KW-0677">Repeat</keyword>
<keyword id="KW-0808">Transferase</keyword>
<accession>E0U070</accession>
<accession>P39754</accession>
<proteinExistence type="inferred from homology"/>
<dbReference type="EC" id="2.6.1.16"/>
<dbReference type="EMBL" id="CP002183">
    <property type="protein sequence ID" value="ADM36241.1"/>
    <property type="molecule type" value="Genomic_DNA"/>
</dbReference>
<dbReference type="EMBL" id="D21199">
    <property type="protein sequence ID" value="BAA04741.1"/>
    <property type="molecule type" value="Genomic_DNA"/>
</dbReference>
<dbReference type="RefSeq" id="WP_003223659.1">
    <property type="nucleotide sequence ID" value="NZ_CP148102.1"/>
</dbReference>
<dbReference type="SMR" id="E0U070"/>
<dbReference type="MEROPS" id="C44.A08"/>
<dbReference type="KEGG" id="bss:BSUW23_00920"/>
<dbReference type="HOGENOM" id="CLU_012520_7_1_9"/>
<dbReference type="Proteomes" id="UP000002233">
    <property type="component" value="Chromosome"/>
</dbReference>
<dbReference type="GO" id="GO:0005829">
    <property type="term" value="C:cytosol"/>
    <property type="evidence" value="ECO:0007669"/>
    <property type="project" value="TreeGrafter"/>
</dbReference>
<dbReference type="GO" id="GO:0097367">
    <property type="term" value="F:carbohydrate derivative binding"/>
    <property type="evidence" value="ECO:0007669"/>
    <property type="project" value="InterPro"/>
</dbReference>
<dbReference type="GO" id="GO:0004360">
    <property type="term" value="F:glutamine-fructose-6-phosphate transaminase (isomerizing) activity"/>
    <property type="evidence" value="ECO:0007669"/>
    <property type="project" value="UniProtKB-UniRule"/>
</dbReference>
<dbReference type="GO" id="GO:0005975">
    <property type="term" value="P:carbohydrate metabolic process"/>
    <property type="evidence" value="ECO:0007669"/>
    <property type="project" value="UniProtKB-UniRule"/>
</dbReference>
<dbReference type="GO" id="GO:0006002">
    <property type="term" value="P:fructose 6-phosphate metabolic process"/>
    <property type="evidence" value="ECO:0007669"/>
    <property type="project" value="TreeGrafter"/>
</dbReference>
<dbReference type="GO" id="GO:0006487">
    <property type="term" value="P:protein N-linked glycosylation"/>
    <property type="evidence" value="ECO:0007669"/>
    <property type="project" value="TreeGrafter"/>
</dbReference>
<dbReference type="GO" id="GO:0006047">
    <property type="term" value="P:UDP-N-acetylglucosamine metabolic process"/>
    <property type="evidence" value="ECO:0007669"/>
    <property type="project" value="TreeGrafter"/>
</dbReference>
<dbReference type="CDD" id="cd00714">
    <property type="entry name" value="GFAT"/>
    <property type="match status" value="1"/>
</dbReference>
<dbReference type="CDD" id="cd05008">
    <property type="entry name" value="SIS_GlmS_GlmD_1"/>
    <property type="match status" value="1"/>
</dbReference>
<dbReference type="CDD" id="cd05009">
    <property type="entry name" value="SIS_GlmS_GlmD_2"/>
    <property type="match status" value="1"/>
</dbReference>
<dbReference type="FunFam" id="3.40.50.10490:FF:000022">
    <property type="entry name" value="Glutamine--fructose-6-phosphate aminotransferase [isomerizing]"/>
    <property type="match status" value="1"/>
</dbReference>
<dbReference type="FunFam" id="3.60.20.10:FF:000006">
    <property type="entry name" value="Glutamine--fructose-6-phosphate aminotransferase [isomerizing]"/>
    <property type="match status" value="1"/>
</dbReference>
<dbReference type="Gene3D" id="3.40.50.10490">
    <property type="entry name" value="Glucose-6-phosphate isomerase like protein, domain 1"/>
    <property type="match status" value="2"/>
</dbReference>
<dbReference type="Gene3D" id="3.60.20.10">
    <property type="entry name" value="Glutamine Phosphoribosylpyrophosphate, subunit 1, domain 1"/>
    <property type="match status" value="1"/>
</dbReference>
<dbReference type="HAMAP" id="MF_00164">
    <property type="entry name" value="GlmS"/>
    <property type="match status" value="1"/>
</dbReference>
<dbReference type="InterPro" id="IPR017932">
    <property type="entry name" value="GATase_2_dom"/>
</dbReference>
<dbReference type="InterPro" id="IPR005855">
    <property type="entry name" value="GFAT"/>
</dbReference>
<dbReference type="InterPro" id="IPR047084">
    <property type="entry name" value="GFAT_N"/>
</dbReference>
<dbReference type="InterPro" id="IPR035466">
    <property type="entry name" value="GlmS/AgaS_SIS"/>
</dbReference>
<dbReference type="InterPro" id="IPR035490">
    <property type="entry name" value="GlmS/FrlB_SIS"/>
</dbReference>
<dbReference type="InterPro" id="IPR029055">
    <property type="entry name" value="Ntn_hydrolases_N"/>
</dbReference>
<dbReference type="InterPro" id="IPR001347">
    <property type="entry name" value="SIS_dom"/>
</dbReference>
<dbReference type="InterPro" id="IPR046348">
    <property type="entry name" value="SIS_dom_sf"/>
</dbReference>
<dbReference type="NCBIfam" id="TIGR01135">
    <property type="entry name" value="glmS"/>
    <property type="match status" value="1"/>
</dbReference>
<dbReference type="NCBIfam" id="NF001484">
    <property type="entry name" value="PRK00331.1"/>
    <property type="match status" value="1"/>
</dbReference>
<dbReference type="PANTHER" id="PTHR10937">
    <property type="entry name" value="GLUCOSAMINE--FRUCTOSE-6-PHOSPHATE AMINOTRANSFERASE, ISOMERIZING"/>
    <property type="match status" value="1"/>
</dbReference>
<dbReference type="PANTHER" id="PTHR10937:SF0">
    <property type="entry name" value="GLUTAMINE--FRUCTOSE-6-PHOSPHATE TRANSAMINASE (ISOMERIZING)"/>
    <property type="match status" value="1"/>
</dbReference>
<dbReference type="Pfam" id="PF13522">
    <property type="entry name" value="GATase_6"/>
    <property type="match status" value="1"/>
</dbReference>
<dbReference type="Pfam" id="PF01380">
    <property type="entry name" value="SIS"/>
    <property type="match status" value="2"/>
</dbReference>
<dbReference type="SUPFAM" id="SSF56235">
    <property type="entry name" value="N-terminal nucleophile aminohydrolases (Ntn hydrolases)"/>
    <property type="match status" value="1"/>
</dbReference>
<dbReference type="SUPFAM" id="SSF53697">
    <property type="entry name" value="SIS domain"/>
    <property type="match status" value="1"/>
</dbReference>
<dbReference type="PROSITE" id="PS51278">
    <property type="entry name" value="GATASE_TYPE_2"/>
    <property type="match status" value="1"/>
</dbReference>
<dbReference type="PROSITE" id="PS51464">
    <property type="entry name" value="SIS"/>
    <property type="match status" value="2"/>
</dbReference>
<evidence type="ECO:0000250" key="1"/>
<protein>
    <recommendedName>
        <fullName>Glutamine--fructose-6-phosphate aminotransferase [isomerizing]</fullName>
        <ecNumber>2.6.1.16</ecNumber>
    </recommendedName>
    <alternativeName>
        <fullName>D-fructose-6-phosphate amidotransferase</fullName>
    </alternativeName>
    <alternativeName>
        <fullName>GFAT</fullName>
    </alternativeName>
    <alternativeName>
        <fullName>Glucosamine-6-phosphate synthase</fullName>
    </alternativeName>
    <alternativeName>
        <fullName>Hexosephosphate aminotransferase</fullName>
    </alternativeName>
    <alternativeName>
        <fullName>L-glutamine--D-fructose-6-phosphate amidotransferase</fullName>
    </alternativeName>
</protein>